<sequence>MASINRTIEIMKKHGVSKQHLLEEINKKRESNCLVERSNQVSLLRVQKRHFPDAYQSFTDTTTKEPVPNSGRSSWIKLSLLAHMERKHFPPKNNAIFG</sequence>
<organism>
    <name type="scientific">Homo sapiens</name>
    <name type="common">Human</name>
    <dbReference type="NCBI Taxonomy" id="9606"/>
    <lineage>
        <taxon>Eukaryota</taxon>
        <taxon>Metazoa</taxon>
        <taxon>Chordata</taxon>
        <taxon>Craniata</taxon>
        <taxon>Vertebrata</taxon>
        <taxon>Euteleostomi</taxon>
        <taxon>Mammalia</taxon>
        <taxon>Eutheria</taxon>
        <taxon>Euarchontoglires</taxon>
        <taxon>Primates</taxon>
        <taxon>Haplorrhini</taxon>
        <taxon>Catarrhini</taxon>
        <taxon>Hominidae</taxon>
        <taxon>Homo</taxon>
    </lineage>
</organism>
<evidence type="ECO:0000305" key="1"/>
<comment type="similarity">
    <text evidence="1">Belongs to the SPATA45 family.</text>
</comment>
<feature type="chain" id="PRO_0000285785" description="Spermatogenesis-associated protein 45">
    <location>
        <begin position="1"/>
        <end position="98"/>
    </location>
</feature>
<feature type="sequence variant" id="VAR_060195" description="In dbSNP:rs10864004.">
    <original>I</original>
    <variation>T</variation>
    <location>
        <position position="8"/>
    </location>
</feature>
<accession>Q537H7</accession>
<keyword id="KW-1185">Reference proteome</keyword>
<name>SPT45_HUMAN</name>
<dbReference type="EMBL" id="AY640234">
    <property type="protein sequence ID" value="AAU14247.1"/>
    <property type="molecule type" value="mRNA"/>
</dbReference>
<dbReference type="EMBL" id="AC104333">
    <property type="status" value="NOT_ANNOTATED_CDS"/>
    <property type="molecule type" value="Genomic_DNA"/>
</dbReference>
<dbReference type="EMBL" id="BC035742">
    <property type="protein sequence ID" value="AAH35742.1"/>
    <property type="molecule type" value="mRNA"/>
</dbReference>
<dbReference type="CCDS" id="CCDS31020.1"/>
<dbReference type="RefSeq" id="NP_001019772.1">
    <property type="nucleotide sequence ID" value="NM_001024601.3"/>
</dbReference>
<dbReference type="SMR" id="Q537H7"/>
<dbReference type="BioGRID" id="127226">
    <property type="interactions" value="1"/>
</dbReference>
<dbReference type="STRING" id="9606.ENSP00000419160"/>
<dbReference type="BioMuta" id="SPATA45"/>
<dbReference type="MassIVE" id="Q537H7"/>
<dbReference type="PaxDb" id="9606-ENSP00000419160"/>
<dbReference type="PeptideAtlas" id="Q537H7"/>
<dbReference type="ProteomicsDB" id="62434"/>
<dbReference type="Antibodypedia" id="63752">
    <property type="antibodies" value="7 antibodies from 6 providers"/>
</dbReference>
<dbReference type="DNASU" id="149643"/>
<dbReference type="Ensembl" id="ENST00000332912.3">
    <property type="protein sequence ID" value="ENSP00000419160.1"/>
    <property type="gene ID" value="ENSG00000185523.6"/>
</dbReference>
<dbReference type="GeneID" id="149643"/>
<dbReference type="KEGG" id="hsa:149643"/>
<dbReference type="MANE-Select" id="ENST00000332912.3">
    <property type="protein sequence ID" value="ENSP00000419160.1"/>
    <property type="RefSeq nucleotide sequence ID" value="NM_001024601.3"/>
    <property type="RefSeq protein sequence ID" value="NP_001019772.1"/>
</dbReference>
<dbReference type="UCSC" id="uc001hjq.4">
    <property type="organism name" value="human"/>
</dbReference>
<dbReference type="AGR" id="HGNC:33709"/>
<dbReference type="CTD" id="149643"/>
<dbReference type="GeneCards" id="SPATA45"/>
<dbReference type="HGNC" id="HGNC:33709">
    <property type="gene designation" value="SPATA45"/>
</dbReference>
<dbReference type="HPA" id="ENSG00000185523">
    <property type="expression patterns" value="Group enriched (pancreas, testis)"/>
</dbReference>
<dbReference type="neXtProt" id="NX_Q537H7"/>
<dbReference type="OpenTargets" id="ENSG00000185523"/>
<dbReference type="PharmGKB" id="PA164717042"/>
<dbReference type="VEuPathDB" id="HostDB:ENSG00000185523"/>
<dbReference type="eggNOG" id="ENOG502T16S">
    <property type="taxonomic scope" value="Eukaryota"/>
</dbReference>
<dbReference type="GeneTree" id="ENSGT00390000018676"/>
<dbReference type="HOGENOM" id="CLU_182643_0_0_1"/>
<dbReference type="InParanoid" id="Q537H7"/>
<dbReference type="OMA" id="HFSGAYQ"/>
<dbReference type="OrthoDB" id="9441981at2759"/>
<dbReference type="PAN-GO" id="Q537H7">
    <property type="GO annotations" value="0 GO annotations based on evolutionary models"/>
</dbReference>
<dbReference type="PhylomeDB" id="Q537H7"/>
<dbReference type="TreeFam" id="TF338207"/>
<dbReference type="PathwayCommons" id="Q537H7"/>
<dbReference type="SignaLink" id="Q537H7"/>
<dbReference type="BioGRID-ORCS" id="149643">
    <property type="hits" value="8 hits in 1082 CRISPR screens"/>
</dbReference>
<dbReference type="GenomeRNAi" id="149643"/>
<dbReference type="Pharos" id="Q537H7">
    <property type="development level" value="Tdark"/>
</dbReference>
<dbReference type="PRO" id="PR:Q537H7"/>
<dbReference type="Proteomes" id="UP000005640">
    <property type="component" value="Chromosome 1"/>
</dbReference>
<dbReference type="RNAct" id="Q537H7">
    <property type="molecule type" value="protein"/>
</dbReference>
<dbReference type="Bgee" id="ENSG00000185523">
    <property type="expression patterns" value="Expressed in male germ line stem cell (sensu Vertebrata) in testis and 102 other cell types or tissues"/>
</dbReference>
<dbReference type="InterPro" id="IPR038806">
    <property type="entry name" value="SPATA45"/>
</dbReference>
<dbReference type="PANTHER" id="PTHR35822">
    <property type="entry name" value="SPERMATOGENESIS-ASSOCIATED PROTEIN 45"/>
    <property type="match status" value="1"/>
</dbReference>
<dbReference type="PANTHER" id="PTHR35822:SF1">
    <property type="entry name" value="SPERMATOGENESIS-ASSOCIATED PROTEIN 45"/>
    <property type="match status" value="1"/>
</dbReference>
<reference key="1">
    <citation type="submission" date="2004-05" db="EMBL/GenBank/DDBJ databases">
        <title>A new spermatogenesis-related gene.</title>
        <authorList>
            <person name="Wang Y."/>
            <person name="Miao S.Y."/>
            <person name="Zhang X.D."/>
            <person name="Qiao Y."/>
            <person name="Liang G."/>
            <person name="Wang L.F."/>
        </authorList>
    </citation>
    <scope>NUCLEOTIDE SEQUENCE [LARGE SCALE MRNA]</scope>
    <source>
        <tissue>Testis</tissue>
    </source>
</reference>
<reference key="2">
    <citation type="journal article" date="2006" name="Nature">
        <title>The DNA sequence and biological annotation of human chromosome 1.</title>
        <authorList>
            <person name="Gregory S.G."/>
            <person name="Barlow K.F."/>
            <person name="McLay K.E."/>
            <person name="Kaul R."/>
            <person name="Swarbreck D."/>
            <person name="Dunham A."/>
            <person name="Scott C.E."/>
            <person name="Howe K.L."/>
            <person name="Woodfine K."/>
            <person name="Spencer C.C.A."/>
            <person name="Jones M.C."/>
            <person name="Gillson C."/>
            <person name="Searle S."/>
            <person name="Zhou Y."/>
            <person name="Kokocinski F."/>
            <person name="McDonald L."/>
            <person name="Evans R."/>
            <person name="Phillips K."/>
            <person name="Atkinson A."/>
            <person name="Cooper R."/>
            <person name="Jones C."/>
            <person name="Hall R.E."/>
            <person name="Andrews T.D."/>
            <person name="Lloyd C."/>
            <person name="Ainscough R."/>
            <person name="Almeida J.P."/>
            <person name="Ambrose K.D."/>
            <person name="Anderson F."/>
            <person name="Andrew R.W."/>
            <person name="Ashwell R.I.S."/>
            <person name="Aubin K."/>
            <person name="Babbage A.K."/>
            <person name="Bagguley C.L."/>
            <person name="Bailey J."/>
            <person name="Beasley H."/>
            <person name="Bethel G."/>
            <person name="Bird C.P."/>
            <person name="Bray-Allen S."/>
            <person name="Brown J.Y."/>
            <person name="Brown A.J."/>
            <person name="Buckley D."/>
            <person name="Burton J."/>
            <person name="Bye J."/>
            <person name="Carder C."/>
            <person name="Chapman J.C."/>
            <person name="Clark S.Y."/>
            <person name="Clarke G."/>
            <person name="Clee C."/>
            <person name="Cobley V."/>
            <person name="Collier R.E."/>
            <person name="Corby N."/>
            <person name="Coville G.J."/>
            <person name="Davies J."/>
            <person name="Deadman R."/>
            <person name="Dunn M."/>
            <person name="Earthrowl M."/>
            <person name="Ellington A.G."/>
            <person name="Errington H."/>
            <person name="Frankish A."/>
            <person name="Frankland J."/>
            <person name="French L."/>
            <person name="Garner P."/>
            <person name="Garnett J."/>
            <person name="Gay L."/>
            <person name="Ghori M.R.J."/>
            <person name="Gibson R."/>
            <person name="Gilby L.M."/>
            <person name="Gillett W."/>
            <person name="Glithero R.J."/>
            <person name="Grafham D.V."/>
            <person name="Griffiths C."/>
            <person name="Griffiths-Jones S."/>
            <person name="Grocock R."/>
            <person name="Hammond S."/>
            <person name="Harrison E.S.I."/>
            <person name="Hart E."/>
            <person name="Haugen E."/>
            <person name="Heath P.D."/>
            <person name="Holmes S."/>
            <person name="Holt K."/>
            <person name="Howden P.J."/>
            <person name="Hunt A.R."/>
            <person name="Hunt S.E."/>
            <person name="Hunter G."/>
            <person name="Isherwood J."/>
            <person name="James R."/>
            <person name="Johnson C."/>
            <person name="Johnson D."/>
            <person name="Joy A."/>
            <person name="Kay M."/>
            <person name="Kershaw J.K."/>
            <person name="Kibukawa M."/>
            <person name="Kimberley A.M."/>
            <person name="King A."/>
            <person name="Knights A.J."/>
            <person name="Lad H."/>
            <person name="Laird G."/>
            <person name="Lawlor S."/>
            <person name="Leongamornlert D.A."/>
            <person name="Lloyd D.M."/>
            <person name="Loveland J."/>
            <person name="Lovell J."/>
            <person name="Lush M.J."/>
            <person name="Lyne R."/>
            <person name="Martin S."/>
            <person name="Mashreghi-Mohammadi M."/>
            <person name="Matthews L."/>
            <person name="Matthews N.S.W."/>
            <person name="McLaren S."/>
            <person name="Milne S."/>
            <person name="Mistry S."/>
            <person name="Moore M.J.F."/>
            <person name="Nickerson T."/>
            <person name="O'Dell C.N."/>
            <person name="Oliver K."/>
            <person name="Palmeiri A."/>
            <person name="Palmer S.A."/>
            <person name="Parker A."/>
            <person name="Patel D."/>
            <person name="Pearce A.V."/>
            <person name="Peck A.I."/>
            <person name="Pelan S."/>
            <person name="Phelps K."/>
            <person name="Phillimore B.J."/>
            <person name="Plumb R."/>
            <person name="Rajan J."/>
            <person name="Raymond C."/>
            <person name="Rouse G."/>
            <person name="Saenphimmachak C."/>
            <person name="Sehra H.K."/>
            <person name="Sheridan E."/>
            <person name="Shownkeen R."/>
            <person name="Sims S."/>
            <person name="Skuce C.D."/>
            <person name="Smith M."/>
            <person name="Steward C."/>
            <person name="Subramanian S."/>
            <person name="Sycamore N."/>
            <person name="Tracey A."/>
            <person name="Tromans A."/>
            <person name="Van Helmond Z."/>
            <person name="Wall M."/>
            <person name="Wallis J.M."/>
            <person name="White S."/>
            <person name="Whitehead S.L."/>
            <person name="Wilkinson J.E."/>
            <person name="Willey D.L."/>
            <person name="Williams H."/>
            <person name="Wilming L."/>
            <person name="Wray P.W."/>
            <person name="Wu Z."/>
            <person name="Coulson A."/>
            <person name="Vaudin M."/>
            <person name="Sulston J.E."/>
            <person name="Durbin R.M."/>
            <person name="Hubbard T."/>
            <person name="Wooster R."/>
            <person name="Dunham I."/>
            <person name="Carter N.P."/>
            <person name="McVean G."/>
            <person name="Ross M.T."/>
            <person name="Harrow J."/>
            <person name="Olson M.V."/>
            <person name="Beck S."/>
            <person name="Rogers J."/>
            <person name="Bentley D.R."/>
        </authorList>
    </citation>
    <scope>NUCLEOTIDE SEQUENCE [LARGE SCALE GENOMIC DNA]</scope>
</reference>
<reference key="3">
    <citation type="journal article" date="2004" name="Genome Res.">
        <title>The status, quality, and expansion of the NIH full-length cDNA project: the Mammalian Gene Collection (MGC).</title>
        <authorList>
            <consortium name="The MGC Project Team"/>
        </authorList>
    </citation>
    <scope>NUCLEOTIDE SEQUENCE [LARGE SCALE MRNA]</scope>
    <source>
        <tissue>Brain</tissue>
    </source>
</reference>
<protein>
    <recommendedName>
        <fullName>Spermatogenesis-associated protein 45</fullName>
    </recommendedName>
</protein>
<proteinExistence type="inferred from homology"/>
<gene>
    <name type="primary">SPATA45</name>
    <name type="synonym">C1orf227</name>
    <name type="ORF">HSD-44</name>
    <name type="ORF">HSD44</name>
</gene>